<keyword id="KW-0325">Glycoprotein</keyword>
<keyword id="KW-1185">Reference proteome</keyword>
<keyword id="KW-0677">Repeat</keyword>
<keyword id="KW-0964">Secreted</keyword>
<keyword id="KW-0732">Signal</keyword>
<name>AURS_GIBZE</name>
<accession>I1RF63</accession>
<gene>
    <name evidence="11" type="primary">aurS</name>
    <name evidence="10" type="synonym">GIP9</name>
    <name type="ORF">FG02329</name>
    <name type="ORF">FGRAMPH1_01T05603</name>
</gene>
<sequence length="407" mass="45574">MSKQKPSLWRALRALSFIISIPLLIQYLVLKWYSTSQNTPTPVFHEPNHETNLTVWEVLSNDDRVSKFVDVIGKLPDIVRGLSAPQARFTVYAPVNEAFDSFYFPPDPPPFFGLFIAGCHMGPGPVPAERLPSMGTVSSFVNGDIFFTYKQRISVQKDKSGLTLNRAARVLPVNASQSIAVNGFVHHIDTVLELPNSTAHALRTRPELSKLRRGLEATKLSESIYDTNAHVSQTIFAPTNAAFDRLGKTATKFLFSHGGRPYLRALLKYHVVANKTLFSDSYWPHGGAKLMDLSLIPNKDSHQFDLPTLHNNLTLQVESRKIHKKWHLNVLKDQVAEGKSHDSIPVSMPDVILMDGVMHFIDSILLPPAKSEQRKTSWLSRLKSSLGHNKQSIEDLVTLLGPYIDEP</sequence>
<feature type="signal peptide" evidence="1">
    <location>
        <begin position="1"/>
        <end position="35"/>
    </location>
</feature>
<feature type="chain" id="PRO_0000441090" description="Aurofusarin biosynthesis cluster protein S" evidence="1">
    <location>
        <begin position="36"/>
        <end position="407"/>
    </location>
</feature>
<feature type="domain" description="FAS1 1" evidence="2">
    <location>
        <begin position="52"/>
        <end position="192"/>
    </location>
</feature>
<feature type="domain" description="FAS1 2" evidence="2">
    <location>
        <begin position="195"/>
        <end position="365"/>
    </location>
</feature>
<feature type="glycosylation site" description="N-linked (GlcNAc...) asparagine" evidence="3">
    <location>
        <position position="52"/>
    </location>
</feature>
<feature type="glycosylation site" description="N-linked (GlcNAc...) asparagine" evidence="3">
    <location>
        <position position="174"/>
    </location>
</feature>
<feature type="glycosylation site" description="N-linked (GlcNAc...) asparagine" evidence="3">
    <location>
        <position position="196"/>
    </location>
</feature>
<feature type="glycosylation site" description="N-linked (GlcNAc...) asparagine" evidence="3">
    <location>
        <position position="274"/>
    </location>
</feature>
<feature type="glycosylation site" description="N-linked (GlcNAc...) asparagine" evidence="3">
    <location>
        <position position="312"/>
    </location>
</feature>
<protein>
    <recommendedName>
        <fullName evidence="11">Aurofusarin biosynthesis cluster protein S</fullName>
    </recommendedName>
    <alternativeName>
        <fullName evidence="10">Gibberella pigment protein 9</fullName>
    </alternativeName>
</protein>
<reference key="1">
    <citation type="journal article" date="2007" name="Science">
        <title>The Fusarium graminearum genome reveals a link between localized polymorphism and pathogen specialization.</title>
        <authorList>
            <person name="Cuomo C.A."/>
            <person name="Gueldener U."/>
            <person name="Xu J.-R."/>
            <person name="Trail F."/>
            <person name="Turgeon B.G."/>
            <person name="Di Pietro A."/>
            <person name="Walton J.D."/>
            <person name="Ma L.-J."/>
            <person name="Baker S.E."/>
            <person name="Rep M."/>
            <person name="Adam G."/>
            <person name="Antoniw J."/>
            <person name="Baldwin T."/>
            <person name="Calvo S.E."/>
            <person name="Chang Y.-L."/>
            <person name="DeCaprio D."/>
            <person name="Gale L.R."/>
            <person name="Gnerre S."/>
            <person name="Goswami R.S."/>
            <person name="Hammond-Kosack K."/>
            <person name="Harris L.J."/>
            <person name="Hilburn K."/>
            <person name="Kennell J.C."/>
            <person name="Kroken S."/>
            <person name="Magnuson J.K."/>
            <person name="Mannhaupt G."/>
            <person name="Mauceli E.W."/>
            <person name="Mewes H.-W."/>
            <person name="Mitterbauer R."/>
            <person name="Muehlbauer G."/>
            <person name="Muensterkoetter M."/>
            <person name="Nelson D."/>
            <person name="O'Donnell K."/>
            <person name="Ouellet T."/>
            <person name="Qi W."/>
            <person name="Quesneville H."/>
            <person name="Roncero M.I.G."/>
            <person name="Seong K.-Y."/>
            <person name="Tetko I.V."/>
            <person name="Urban M."/>
            <person name="Waalwijk C."/>
            <person name="Ward T.J."/>
            <person name="Yao J."/>
            <person name="Birren B.W."/>
            <person name="Kistler H.C."/>
        </authorList>
    </citation>
    <scope>NUCLEOTIDE SEQUENCE [LARGE SCALE GENOMIC DNA]</scope>
    <source>
        <strain>ATCC MYA-4620 / CBS 123657 / FGSC 9075 / NRRL 31084 / PH-1</strain>
    </source>
</reference>
<reference key="2">
    <citation type="journal article" date="2010" name="Nature">
        <title>Comparative genomics reveals mobile pathogenicity chromosomes in Fusarium.</title>
        <authorList>
            <person name="Ma L.-J."/>
            <person name="van der Does H.C."/>
            <person name="Borkovich K.A."/>
            <person name="Coleman J.J."/>
            <person name="Daboussi M.-J."/>
            <person name="Di Pietro A."/>
            <person name="Dufresne M."/>
            <person name="Freitag M."/>
            <person name="Grabherr M."/>
            <person name="Henrissat B."/>
            <person name="Houterman P.M."/>
            <person name="Kang S."/>
            <person name="Shim W.-B."/>
            <person name="Woloshuk C."/>
            <person name="Xie X."/>
            <person name="Xu J.-R."/>
            <person name="Antoniw J."/>
            <person name="Baker S.E."/>
            <person name="Bluhm B.H."/>
            <person name="Breakspear A."/>
            <person name="Brown D.W."/>
            <person name="Butchko R.A.E."/>
            <person name="Chapman S."/>
            <person name="Coulson R."/>
            <person name="Coutinho P.M."/>
            <person name="Danchin E.G.J."/>
            <person name="Diener A."/>
            <person name="Gale L.R."/>
            <person name="Gardiner D.M."/>
            <person name="Goff S."/>
            <person name="Hammond-Kosack K.E."/>
            <person name="Hilburn K."/>
            <person name="Hua-Van A."/>
            <person name="Jonkers W."/>
            <person name="Kazan K."/>
            <person name="Kodira C.D."/>
            <person name="Koehrsen M."/>
            <person name="Kumar L."/>
            <person name="Lee Y.-H."/>
            <person name="Li L."/>
            <person name="Manners J.M."/>
            <person name="Miranda-Saavedra D."/>
            <person name="Mukherjee M."/>
            <person name="Park G."/>
            <person name="Park J."/>
            <person name="Park S.-Y."/>
            <person name="Proctor R.H."/>
            <person name="Regev A."/>
            <person name="Ruiz-Roldan M.C."/>
            <person name="Sain D."/>
            <person name="Sakthikumar S."/>
            <person name="Sykes S."/>
            <person name="Schwartz D.C."/>
            <person name="Turgeon B.G."/>
            <person name="Wapinski I."/>
            <person name="Yoder O."/>
            <person name="Young S."/>
            <person name="Zeng Q."/>
            <person name="Zhou S."/>
            <person name="Galagan J."/>
            <person name="Cuomo C.A."/>
            <person name="Kistler H.C."/>
            <person name="Rep M."/>
        </authorList>
    </citation>
    <scope>GENOME REANNOTATION</scope>
    <source>
        <strain>ATCC MYA-4620 / CBS 123657 / FGSC 9075 / NRRL 31084 / PH-1</strain>
    </source>
</reference>
<reference key="3">
    <citation type="journal article" date="2015" name="BMC Genomics">
        <title>The completed genome sequence of the pathogenic ascomycete fungus Fusarium graminearum.</title>
        <authorList>
            <person name="King R."/>
            <person name="Urban M."/>
            <person name="Hammond-Kosack M.C.U."/>
            <person name="Hassani-Pak K."/>
            <person name="Hammond-Kosack K.E."/>
        </authorList>
    </citation>
    <scope>NUCLEOTIDE SEQUENCE [LARGE SCALE GENOMIC DNA]</scope>
    <source>
        <strain>ATCC MYA-4620 / CBS 123657 / FGSC 9075 / NRRL 31084 / PH-1</strain>
    </source>
</reference>
<reference key="4">
    <citation type="journal article" date="2005" name="Appl. Environ. Microbiol.">
        <title>Putative polyketide synthase and laccase genes for biosynthesis of aurofusarin in Gibberella zeae.</title>
        <authorList>
            <person name="Kim J.E."/>
            <person name="Han K.H."/>
            <person name="Jin J."/>
            <person name="Kim H."/>
            <person name="Kim J.C."/>
            <person name="Yun S.H."/>
            <person name="Lee Y.W."/>
        </authorList>
    </citation>
    <scope>FUNCTION</scope>
</reference>
<reference key="5">
    <citation type="journal article" date="2005" name="Fungal Genet. Biol.">
        <title>Identification of a gene cluster responsible for the biosynthesis of aurofusarin in the Fusarium graminearum species complex.</title>
        <authorList>
            <person name="Malz S."/>
            <person name="Grell M.N."/>
            <person name="Thrane C."/>
            <person name="Maier F.J."/>
            <person name="Rosager P."/>
            <person name="Felk A."/>
            <person name="Albertsen K.S."/>
            <person name="Salomon S."/>
            <person name="Bohn L."/>
            <person name="Schaefer W."/>
            <person name="Giese H."/>
        </authorList>
    </citation>
    <scope>FUNCTION</scope>
    <scope>PATHWAY</scope>
</reference>
<reference key="6">
    <citation type="journal article" date="2006" name="Mol. Microbiol.">
        <title>The biosynthetic pathway for aurofusarin in Fusarium graminearum reveals a close link between the naphthoquinones and naphthopyrones.</title>
        <authorList>
            <person name="Frandsen R.J."/>
            <person name="Nielsen N.J."/>
            <person name="Maolanon N."/>
            <person name="Soerensen J.C."/>
            <person name="Olsson S."/>
            <person name="Nielsen J."/>
            <person name="Giese H."/>
        </authorList>
    </citation>
    <scope>FUNCTION</scope>
    <scope>INDUCTION</scope>
    <scope>PATHWAY</scope>
</reference>
<reference key="7">
    <citation type="journal article" date="2006" name="Appl. Environ. Microbiol.">
        <title>GIP2, a putative transcription factor that regulates the aurofusarin biosynthetic gene cluster in Gibberella zeae.</title>
        <authorList>
            <person name="Kim J.E."/>
            <person name="Jin J."/>
            <person name="Kim H."/>
            <person name="Kim J.C."/>
            <person name="Yun S.H."/>
            <person name="Lee Y.W."/>
        </authorList>
    </citation>
    <scope>INDUCTION</scope>
</reference>
<reference key="8">
    <citation type="journal article" date="2011" name="J. Biol. Chem.">
        <title>Two novel classes of enzymes are required for the biosynthesis of aurofusarin in Fusarium graminearum.</title>
        <authorList>
            <person name="Frandsen R.J."/>
            <person name="Schuett C."/>
            <person name="Lund B.W."/>
            <person name="Staerk D."/>
            <person name="Nielsen J."/>
            <person name="Olsson S."/>
            <person name="Giese H."/>
        </authorList>
    </citation>
    <scope>FUNCTION</scope>
    <scope>DISRUPTION PHENOTYPE</scope>
    <scope>SUBCELLULAR LOCATION</scope>
    <scope>SUBUNIT</scope>
    <scope>PATHWAY</scope>
</reference>
<reference key="9">
    <citation type="journal article" date="2013" name="Microb. Cell Fact.">
        <title>Reconstruction of the biosynthetic pathway for the core fungal polyketide scaffold rubrofusarin in Saccharomyces cerevisiae.</title>
        <authorList>
            <person name="Rugbjerg P."/>
            <person name="Naesby M."/>
            <person name="Mortensen U.H."/>
            <person name="Frandsen R.J."/>
        </authorList>
    </citation>
    <scope>FUNCTION</scope>
</reference>
<comment type="function">
    <text evidence="4 5 7 8 9">Part of the gene cluster that mediates the biosynthesis of aurofusarin, a red mycelium pigment which is acting as a mycotoxin (PubMed:15809006, PubMed:15811992, PubMed:16879655). The first step is performed by the polyketide synthase which condenses one acetyl-CoA and 6 malonyl-CoA units to form the first intermediate, the cyclic heptaketide and yellow pigment YWA1 (PubMed:21296881, PubMed:23557488). The C2 hydroxyl group in the pyrone ring of YWA1 is probably formed during ring closure by an aldol-type cyclization reaction (PubMed:21296881). The dehydratase aurZ then acts as the first tailoring enzyme in the aurofusarin biosynthetic pathway by converting YWA1 to nor-rubrofusarin (PubMed:21296881, PubMed:23557488). Nor-rubrofusarin is then methylated to rubrofusarin by the O-methyltransferase aurJ (PubMed:21296881, PubMed:23557488). Rubrofusarin is then transported across the plasma membrane by the rubrofusarin-specific pump aurT for further enzymatic processing by the extracellular complex composed of GIP1, aurF, aurO and aurS to yield aurofusarin (PubMed:21296881).</text>
</comment>
<comment type="pathway">
    <text evidence="4 7 8">Pigment biosynthesis.</text>
</comment>
<comment type="subunit">
    <text evidence="12">Might be part of an extracellular enzyme complex composed of GIP1, aurF, aurO and aurS (PubMed:21296881).</text>
</comment>
<comment type="subcellular location">
    <subcellularLocation>
        <location evidence="12">Secreted</location>
    </subcellularLocation>
    <subcellularLocation>
        <location evidence="12">Secreted</location>
        <location evidence="12">Extracellular space</location>
    </subcellularLocation>
</comment>
<comment type="induction">
    <text evidence="6 7">Expression is regulated by the aurofusarin biosynthesis cluster-specific transcription factor aurR1/GIP2 (PubMed:16461721, PubMed:16879655).</text>
</comment>
<comment type="disruption phenotype">
    <text evidence="8">Impairs autofusarin biosynthesis and leads to a yellow pigmentation via accumulation of the intermediate rubrofusarin (PubMed:21296881).</text>
</comment>
<organism>
    <name type="scientific">Gibberella zeae (strain ATCC MYA-4620 / CBS 123657 / FGSC 9075 / NRRL 31084 / PH-1)</name>
    <name type="common">Wheat head blight fungus</name>
    <name type="synonym">Fusarium graminearum</name>
    <dbReference type="NCBI Taxonomy" id="229533"/>
    <lineage>
        <taxon>Eukaryota</taxon>
        <taxon>Fungi</taxon>
        <taxon>Dikarya</taxon>
        <taxon>Ascomycota</taxon>
        <taxon>Pezizomycotina</taxon>
        <taxon>Sordariomycetes</taxon>
        <taxon>Hypocreomycetidae</taxon>
        <taxon>Hypocreales</taxon>
        <taxon>Nectriaceae</taxon>
        <taxon>Fusarium</taxon>
    </lineage>
</organism>
<evidence type="ECO:0000255" key="1"/>
<evidence type="ECO:0000255" key="2">
    <source>
        <dbReference type="PROSITE-ProRule" id="PRU00082"/>
    </source>
</evidence>
<evidence type="ECO:0000255" key="3">
    <source>
        <dbReference type="PROSITE-ProRule" id="PRU00498"/>
    </source>
</evidence>
<evidence type="ECO:0000269" key="4">
    <source>
    </source>
</evidence>
<evidence type="ECO:0000269" key="5">
    <source>
    </source>
</evidence>
<evidence type="ECO:0000269" key="6">
    <source>
    </source>
</evidence>
<evidence type="ECO:0000269" key="7">
    <source>
    </source>
</evidence>
<evidence type="ECO:0000269" key="8">
    <source>
    </source>
</evidence>
<evidence type="ECO:0000269" key="9">
    <source>
    </source>
</evidence>
<evidence type="ECO:0000303" key="10">
    <source>
    </source>
</evidence>
<evidence type="ECO:0000303" key="11">
    <source>
    </source>
</evidence>
<evidence type="ECO:0000305" key="12">
    <source>
    </source>
</evidence>
<proteinExistence type="evidence at protein level"/>
<dbReference type="EMBL" id="HG970332">
    <property type="protein sequence ID" value="CEF74606.1"/>
    <property type="molecule type" value="Genomic_DNA"/>
</dbReference>
<dbReference type="RefSeq" id="XP_011318238.1">
    <property type="nucleotide sequence ID" value="XM_011319936.1"/>
</dbReference>
<dbReference type="SMR" id="I1RF63"/>
<dbReference type="STRING" id="229533.I1RF63"/>
<dbReference type="GlyCosmos" id="I1RF63">
    <property type="glycosylation" value="5 sites, No reported glycans"/>
</dbReference>
<dbReference type="KEGG" id="fgr:FGSG_02329"/>
<dbReference type="VEuPathDB" id="FungiDB:FGRAMPH1_01G05603"/>
<dbReference type="eggNOG" id="KOG1437">
    <property type="taxonomic scope" value="Eukaryota"/>
</dbReference>
<dbReference type="HOGENOM" id="CLU_778873_0_0_1"/>
<dbReference type="InParanoid" id="I1RF63"/>
<dbReference type="OrthoDB" id="44277at110618"/>
<dbReference type="Proteomes" id="UP000070720">
    <property type="component" value="Chromosome 1"/>
</dbReference>
<dbReference type="GO" id="GO:0005576">
    <property type="term" value="C:extracellular region"/>
    <property type="evidence" value="ECO:0007669"/>
    <property type="project" value="UniProtKB-SubCell"/>
</dbReference>
<dbReference type="Gene3D" id="2.30.180.10">
    <property type="entry name" value="FAS1 domain"/>
    <property type="match status" value="2"/>
</dbReference>
<dbReference type="InterPro" id="IPR050904">
    <property type="entry name" value="Adhesion/Biosynth-related"/>
</dbReference>
<dbReference type="InterPro" id="IPR036378">
    <property type="entry name" value="FAS1_dom_sf"/>
</dbReference>
<dbReference type="InterPro" id="IPR000782">
    <property type="entry name" value="FAS1_domain"/>
</dbReference>
<dbReference type="PANTHER" id="PTHR10900:SF77">
    <property type="entry name" value="FI19380P1"/>
    <property type="match status" value="1"/>
</dbReference>
<dbReference type="PANTHER" id="PTHR10900">
    <property type="entry name" value="PERIOSTIN-RELATED"/>
    <property type="match status" value="1"/>
</dbReference>
<dbReference type="Pfam" id="PF02469">
    <property type="entry name" value="Fasciclin"/>
    <property type="match status" value="2"/>
</dbReference>
<dbReference type="SMART" id="SM00554">
    <property type="entry name" value="FAS1"/>
    <property type="match status" value="2"/>
</dbReference>
<dbReference type="SUPFAM" id="SSF82153">
    <property type="entry name" value="FAS1 domain"/>
    <property type="match status" value="2"/>
</dbReference>
<dbReference type="PROSITE" id="PS50213">
    <property type="entry name" value="FAS1"/>
    <property type="match status" value="2"/>
</dbReference>